<reference key="1">
    <citation type="journal article" date="2003" name="Nature">
        <title>Genome sequence of Bacillus cereus and comparative analysis with Bacillus anthracis.</title>
        <authorList>
            <person name="Ivanova N."/>
            <person name="Sorokin A."/>
            <person name="Anderson I."/>
            <person name="Galleron N."/>
            <person name="Candelon B."/>
            <person name="Kapatral V."/>
            <person name="Bhattacharyya A."/>
            <person name="Reznik G."/>
            <person name="Mikhailova N."/>
            <person name="Lapidus A."/>
            <person name="Chu L."/>
            <person name="Mazur M."/>
            <person name="Goltsman E."/>
            <person name="Larsen N."/>
            <person name="D'Souza M."/>
            <person name="Walunas T."/>
            <person name="Grechkin Y."/>
            <person name="Pusch G."/>
            <person name="Haselkorn R."/>
            <person name="Fonstein M."/>
            <person name="Ehrlich S.D."/>
            <person name="Overbeek R."/>
            <person name="Kyrpides N.C."/>
        </authorList>
    </citation>
    <scope>NUCLEOTIDE SEQUENCE [LARGE SCALE GENOMIC DNA]</scope>
    <source>
        <strain>ATCC 14579 / DSM 31 / CCUG 7414 / JCM 2152 / NBRC 15305 / NCIMB 9373 / NCTC 2599 / NRRL B-3711</strain>
    </source>
</reference>
<sequence length="259" mass="29187">MNWLEAFILGIIQGLTEFLPISSTGHLYLGRHLFRLDEAGLFLDTMLHIGTLLAVFIYYKKEFIYLIKNPFSKLMLLLIVGTIPAVVIGLLFKDFFEDISKTGITIGWEFLVSGFFLYMADKQKNGRKKMDDITYKDALIIGSFQAAAIFPAISRSGMTIVAALWRKLDRETAAYFSFLLSTPAIVGAIILQFVDVFQGKAESISSTSLIVGTLSAAFFGYIAVSWMIQYLKRHSLKVFAYYVWGLGILILMLQFTDVF</sequence>
<evidence type="ECO:0000255" key="1">
    <source>
        <dbReference type="HAMAP-Rule" id="MF_01006"/>
    </source>
</evidence>
<proteinExistence type="inferred from homology"/>
<comment type="function">
    <text evidence="1">Catalyzes the dephosphorylation of undecaprenyl diphosphate (UPP). Confers resistance to bacitracin.</text>
</comment>
<comment type="catalytic activity">
    <reaction evidence="1">
        <text>di-trans,octa-cis-undecaprenyl diphosphate + H2O = di-trans,octa-cis-undecaprenyl phosphate + phosphate + H(+)</text>
        <dbReference type="Rhea" id="RHEA:28094"/>
        <dbReference type="ChEBI" id="CHEBI:15377"/>
        <dbReference type="ChEBI" id="CHEBI:15378"/>
        <dbReference type="ChEBI" id="CHEBI:43474"/>
        <dbReference type="ChEBI" id="CHEBI:58405"/>
        <dbReference type="ChEBI" id="CHEBI:60392"/>
        <dbReference type="EC" id="3.6.1.27"/>
    </reaction>
</comment>
<comment type="subcellular location">
    <subcellularLocation>
        <location evidence="1">Cell membrane</location>
        <topology evidence="1">Multi-pass membrane protein</topology>
    </subcellularLocation>
</comment>
<comment type="miscellaneous">
    <text>Bacitracin is thought to be involved in the inhibition of peptidoglycan synthesis by sequestering undecaprenyl diphosphate, thereby reducing the pool of lipid carrier available.</text>
</comment>
<comment type="similarity">
    <text evidence="1">Belongs to the UppP family.</text>
</comment>
<organism>
    <name type="scientific">Bacillus cereus (strain ATCC 14579 / DSM 31 / CCUG 7414 / JCM 2152 / NBRC 15305 / NCIMB 9373 / NCTC 2599 / NRRL B-3711)</name>
    <dbReference type="NCBI Taxonomy" id="226900"/>
    <lineage>
        <taxon>Bacteria</taxon>
        <taxon>Bacillati</taxon>
        <taxon>Bacillota</taxon>
        <taxon>Bacilli</taxon>
        <taxon>Bacillales</taxon>
        <taxon>Bacillaceae</taxon>
        <taxon>Bacillus</taxon>
        <taxon>Bacillus cereus group</taxon>
    </lineage>
</organism>
<accession>Q81CP1</accession>
<protein>
    <recommendedName>
        <fullName evidence="1">Undecaprenyl-diphosphatase 3</fullName>
        <ecNumber evidence="1">3.6.1.27</ecNumber>
    </recommendedName>
    <alternativeName>
        <fullName evidence="1">Bacitracin resistance protein 3</fullName>
    </alternativeName>
    <alternativeName>
        <fullName evidence="1">Undecaprenyl pyrophosphate phosphatase 3</fullName>
    </alternativeName>
</protein>
<keyword id="KW-0046">Antibiotic resistance</keyword>
<keyword id="KW-1003">Cell membrane</keyword>
<keyword id="KW-0133">Cell shape</keyword>
<keyword id="KW-0961">Cell wall biogenesis/degradation</keyword>
<keyword id="KW-0378">Hydrolase</keyword>
<keyword id="KW-0472">Membrane</keyword>
<keyword id="KW-0573">Peptidoglycan synthesis</keyword>
<keyword id="KW-1185">Reference proteome</keyword>
<keyword id="KW-0812">Transmembrane</keyword>
<keyword id="KW-1133">Transmembrane helix</keyword>
<gene>
    <name evidence="1" type="primary">uppP3</name>
    <name type="synonym">bacA3</name>
    <name type="synonym">upk3</name>
    <name type="ordered locus">BC_2711</name>
</gene>
<dbReference type="EC" id="3.6.1.27" evidence="1"/>
<dbReference type="EMBL" id="AE016877">
    <property type="protein sequence ID" value="AAP09665.1"/>
    <property type="molecule type" value="Genomic_DNA"/>
</dbReference>
<dbReference type="RefSeq" id="NP_832464.1">
    <property type="nucleotide sequence ID" value="NC_004722.1"/>
</dbReference>
<dbReference type="RefSeq" id="WP_001104295.1">
    <property type="nucleotide sequence ID" value="NC_004722.1"/>
</dbReference>
<dbReference type="SMR" id="Q81CP1"/>
<dbReference type="STRING" id="226900.BC_2711"/>
<dbReference type="KEGG" id="bce:BC2711"/>
<dbReference type="PATRIC" id="fig|226900.8.peg.2762"/>
<dbReference type="HOGENOM" id="CLU_060296_1_0_9"/>
<dbReference type="OrthoDB" id="9808289at2"/>
<dbReference type="Proteomes" id="UP000001417">
    <property type="component" value="Chromosome"/>
</dbReference>
<dbReference type="GO" id="GO:0005886">
    <property type="term" value="C:plasma membrane"/>
    <property type="evidence" value="ECO:0000318"/>
    <property type="project" value="GO_Central"/>
</dbReference>
<dbReference type="GO" id="GO:0050380">
    <property type="term" value="F:undecaprenyl-diphosphatase activity"/>
    <property type="evidence" value="ECO:0000318"/>
    <property type="project" value="GO_Central"/>
</dbReference>
<dbReference type="GO" id="GO:0071555">
    <property type="term" value="P:cell wall organization"/>
    <property type="evidence" value="ECO:0007669"/>
    <property type="project" value="UniProtKB-KW"/>
</dbReference>
<dbReference type="GO" id="GO:0009252">
    <property type="term" value="P:peptidoglycan biosynthetic process"/>
    <property type="evidence" value="ECO:0007669"/>
    <property type="project" value="UniProtKB-KW"/>
</dbReference>
<dbReference type="GO" id="GO:0000270">
    <property type="term" value="P:peptidoglycan metabolic process"/>
    <property type="evidence" value="ECO:0000318"/>
    <property type="project" value="GO_Central"/>
</dbReference>
<dbReference type="GO" id="GO:0008360">
    <property type="term" value="P:regulation of cell shape"/>
    <property type="evidence" value="ECO:0007669"/>
    <property type="project" value="UniProtKB-KW"/>
</dbReference>
<dbReference type="GO" id="GO:0046677">
    <property type="term" value="P:response to antibiotic"/>
    <property type="evidence" value="ECO:0007669"/>
    <property type="project" value="UniProtKB-UniRule"/>
</dbReference>
<dbReference type="HAMAP" id="MF_01006">
    <property type="entry name" value="Undec_diphosphatase"/>
    <property type="match status" value="1"/>
</dbReference>
<dbReference type="InterPro" id="IPR003824">
    <property type="entry name" value="UppP"/>
</dbReference>
<dbReference type="PANTHER" id="PTHR30622">
    <property type="entry name" value="UNDECAPRENYL-DIPHOSPHATASE"/>
    <property type="match status" value="1"/>
</dbReference>
<dbReference type="PANTHER" id="PTHR30622:SF4">
    <property type="entry name" value="UNDECAPRENYL-DIPHOSPHATASE"/>
    <property type="match status" value="1"/>
</dbReference>
<dbReference type="Pfam" id="PF02673">
    <property type="entry name" value="BacA"/>
    <property type="match status" value="1"/>
</dbReference>
<feature type="chain" id="PRO_0000151093" description="Undecaprenyl-diphosphatase 3">
    <location>
        <begin position="1"/>
        <end position="259"/>
    </location>
</feature>
<feature type="transmembrane region" description="Helical" evidence="1">
    <location>
        <begin position="1"/>
        <end position="21"/>
    </location>
</feature>
<feature type="transmembrane region" description="Helical" evidence="1">
    <location>
        <begin position="39"/>
        <end position="59"/>
    </location>
</feature>
<feature type="transmembrane region" description="Helical" evidence="1">
    <location>
        <begin position="71"/>
        <end position="91"/>
    </location>
</feature>
<feature type="transmembrane region" description="Helical" evidence="1">
    <location>
        <begin position="99"/>
        <end position="119"/>
    </location>
</feature>
<feature type="transmembrane region" description="Helical" evidence="1">
    <location>
        <begin position="133"/>
        <end position="153"/>
    </location>
</feature>
<feature type="transmembrane region" description="Helical" evidence="1">
    <location>
        <begin position="174"/>
        <end position="194"/>
    </location>
</feature>
<feature type="transmembrane region" description="Helical" evidence="1">
    <location>
        <begin position="208"/>
        <end position="228"/>
    </location>
</feature>
<feature type="transmembrane region" description="Helical" evidence="1">
    <location>
        <begin position="239"/>
        <end position="259"/>
    </location>
</feature>
<name>UPPP3_BACCR</name>